<gene>
    <name evidence="2" type="primary">UBA4</name>
    <name type="synonym">NCS3</name>
    <name type="ORF">SCRG_04824</name>
</gene>
<proteinExistence type="inferred from homology"/>
<protein>
    <recommendedName>
        <fullName evidence="2">Adenylyltransferase and sulfurtransferase UBA4</fullName>
    </recommendedName>
    <alternativeName>
        <fullName>Needs CLA4 to survive protein 3</fullName>
    </alternativeName>
    <alternativeName>
        <fullName evidence="2">Ubiquitin-like protein activator 4</fullName>
    </alternativeName>
    <domain>
        <recommendedName>
            <fullName evidence="2">Adenylyltransferase UBA4</fullName>
            <ecNumber evidence="2">2.7.7.-</ecNumber>
        </recommendedName>
    </domain>
    <domain>
        <recommendedName>
            <fullName evidence="2">Sulfurtransferase UBA4</fullName>
            <ecNumber evidence="2">2.8.1.-</ecNumber>
        </recommendedName>
    </domain>
</protein>
<feature type="chain" id="PRO_0000369236" description="Adenylyltransferase and sulfurtransferase UBA4">
    <location>
        <begin position="1"/>
        <end position="440"/>
    </location>
</feature>
<feature type="domain" description="Rhodanese" evidence="2">
    <location>
        <begin position="339"/>
        <end position="438"/>
    </location>
</feature>
<feature type="active site" description="Glycyl thioester intermediate; for adenylyltransferase activity" evidence="2">
    <location>
        <position position="225"/>
    </location>
</feature>
<feature type="active site" description="Cysteine persulfide intermediate; for sulfurtransferase activity" evidence="2">
    <location>
        <position position="397"/>
    </location>
</feature>
<feature type="binding site" evidence="2">
    <location>
        <position position="77"/>
    </location>
    <ligand>
        <name>ATP</name>
        <dbReference type="ChEBI" id="CHEBI:30616"/>
    </ligand>
</feature>
<feature type="binding site" evidence="2">
    <location>
        <position position="98"/>
    </location>
    <ligand>
        <name>ATP</name>
        <dbReference type="ChEBI" id="CHEBI:30616"/>
    </ligand>
</feature>
<feature type="binding site" evidence="2">
    <location>
        <begin position="105"/>
        <end position="109"/>
    </location>
    <ligand>
        <name>ATP</name>
        <dbReference type="ChEBI" id="CHEBI:30616"/>
    </ligand>
</feature>
<feature type="binding site" evidence="2">
    <location>
        <position position="122"/>
    </location>
    <ligand>
        <name>ATP</name>
        <dbReference type="ChEBI" id="CHEBI:30616"/>
    </ligand>
</feature>
<feature type="binding site" evidence="2">
    <location>
        <begin position="166"/>
        <end position="167"/>
    </location>
    <ligand>
        <name>ATP</name>
        <dbReference type="ChEBI" id="CHEBI:30616"/>
    </ligand>
</feature>
<feature type="binding site" evidence="2">
    <location>
        <position position="208"/>
    </location>
    <ligand>
        <name>Zn(2+)</name>
        <dbReference type="ChEBI" id="CHEBI:29105"/>
    </ligand>
</feature>
<feature type="binding site" evidence="2">
    <location>
        <position position="211"/>
    </location>
    <ligand>
        <name>Zn(2+)</name>
        <dbReference type="ChEBI" id="CHEBI:29105"/>
    </ligand>
</feature>
<feature type="binding site" evidence="2">
    <location>
        <position position="286"/>
    </location>
    <ligand>
        <name>Zn(2+)</name>
        <dbReference type="ChEBI" id="CHEBI:29105"/>
    </ligand>
</feature>
<feature type="binding site" evidence="2">
    <location>
        <position position="289"/>
    </location>
    <ligand>
        <name>Zn(2+)</name>
        <dbReference type="ChEBI" id="CHEBI:29105"/>
    </ligand>
</feature>
<feature type="modified residue" description="N-acetylmethionine" evidence="1">
    <location>
        <position position="1"/>
    </location>
</feature>
<feature type="modified residue" description="Phosphoserine" evidence="1">
    <location>
        <position position="326"/>
    </location>
</feature>
<keyword id="KW-0007">Acetylation</keyword>
<keyword id="KW-0067">ATP-binding</keyword>
<keyword id="KW-0963">Cytoplasm</keyword>
<keyword id="KW-0479">Metal-binding</keyword>
<keyword id="KW-0511">Multifunctional enzyme</keyword>
<keyword id="KW-0547">Nucleotide-binding</keyword>
<keyword id="KW-0548">Nucleotidyltransferase</keyword>
<keyword id="KW-0597">Phosphoprotein</keyword>
<keyword id="KW-0808">Transferase</keyword>
<keyword id="KW-0819">tRNA processing</keyword>
<keyword id="KW-0833">Ubl conjugation pathway</keyword>
<keyword id="KW-0862">Zinc</keyword>
<organism>
    <name type="scientific">Saccharomyces cerevisiae (strain RM11-1a)</name>
    <name type="common">Baker's yeast</name>
    <dbReference type="NCBI Taxonomy" id="285006"/>
    <lineage>
        <taxon>Eukaryota</taxon>
        <taxon>Fungi</taxon>
        <taxon>Dikarya</taxon>
        <taxon>Ascomycota</taxon>
        <taxon>Saccharomycotina</taxon>
        <taxon>Saccharomycetes</taxon>
        <taxon>Saccharomycetales</taxon>
        <taxon>Saccharomycetaceae</taxon>
        <taxon>Saccharomyces</taxon>
    </lineage>
</organism>
<name>UBA4_YEAS1</name>
<evidence type="ECO:0000250" key="1">
    <source>
        <dbReference type="UniProtKB" id="P38820"/>
    </source>
</evidence>
<evidence type="ECO:0000255" key="2">
    <source>
        <dbReference type="HAMAP-Rule" id="MF_03049"/>
    </source>
</evidence>
<dbReference type="EC" id="2.7.7.-" evidence="2"/>
<dbReference type="EC" id="2.8.1.-" evidence="2"/>
<dbReference type="EMBL" id="CH408053">
    <property type="protein sequence ID" value="EDV09157.1"/>
    <property type="molecule type" value="Genomic_DNA"/>
</dbReference>
<dbReference type="SMR" id="B3LSM6"/>
<dbReference type="HOGENOM" id="CLU_013325_1_2_1"/>
<dbReference type="OrthoDB" id="4220at4893"/>
<dbReference type="UniPathway" id="UPA00988"/>
<dbReference type="Proteomes" id="UP000008335">
    <property type="component" value="Unassembled WGS sequence"/>
</dbReference>
<dbReference type="GO" id="GO:0005829">
    <property type="term" value="C:cytosol"/>
    <property type="evidence" value="ECO:0007669"/>
    <property type="project" value="InterPro"/>
</dbReference>
<dbReference type="GO" id="GO:0070566">
    <property type="term" value="F:adenylyltransferase activity"/>
    <property type="evidence" value="ECO:0007669"/>
    <property type="project" value="InterPro"/>
</dbReference>
<dbReference type="GO" id="GO:0005524">
    <property type="term" value="F:ATP binding"/>
    <property type="evidence" value="ECO:0007669"/>
    <property type="project" value="UniProtKB-KW"/>
</dbReference>
<dbReference type="GO" id="GO:0046872">
    <property type="term" value="F:metal ion binding"/>
    <property type="evidence" value="ECO:0007669"/>
    <property type="project" value="UniProtKB-KW"/>
</dbReference>
<dbReference type="GO" id="GO:0004792">
    <property type="term" value="F:thiosulfate-cyanide sulfurtransferase activity"/>
    <property type="evidence" value="ECO:0007669"/>
    <property type="project" value="TreeGrafter"/>
</dbReference>
<dbReference type="GO" id="GO:0042292">
    <property type="term" value="F:URM1 activating enzyme activity"/>
    <property type="evidence" value="ECO:0007669"/>
    <property type="project" value="TreeGrafter"/>
</dbReference>
<dbReference type="GO" id="GO:0032447">
    <property type="term" value="P:protein urmylation"/>
    <property type="evidence" value="ECO:0007669"/>
    <property type="project" value="UniProtKB-UniRule"/>
</dbReference>
<dbReference type="GO" id="GO:0002143">
    <property type="term" value="P:tRNA wobble position uridine thiolation"/>
    <property type="evidence" value="ECO:0007669"/>
    <property type="project" value="InterPro"/>
</dbReference>
<dbReference type="CDD" id="cd01526">
    <property type="entry name" value="RHOD_ThiF"/>
    <property type="match status" value="1"/>
</dbReference>
<dbReference type="CDD" id="cd00757">
    <property type="entry name" value="ThiF_MoeB_HesA_family"/>
    <property type="match status" value="1"/>
</dbReference>
<dbReference type="FunFam" id="3.40.250.10:FF:000014">
    <property type="entry name" value="Adenylyltransferase and sulfurtransferase MOCS3"/>
    <property type="match status" value="1"/>
</dbReference>
<dbReference type="FunFam" id="3.40.50.720:FF:000033">
    <property type="entry name" value="Adenylyltransferase and sulfurtransferase MOCS3"/>
    <property type="match status" value="1"/>
</dbReference>
<dbReference type="Gene3D" id="3.40.50.720">
    <property type="entry name" value="NAD(P)-binding Rossmann-like Domain"/>
    <property type="match status" value="1"/>
</dbReference>
<dbReference type="Gene3D" id="3.40.250.10">
    <property type="entry name" value="Rhodanese-like domain"/>
    <property type="match status" value="1"/>
</dbReference>
<dbReference type="HAMAP" id="MF_03049">
    <property type="entry name" value="MOCS3_Uba4"/>
    <property type="match status" value="1"/>
</dbReference>
<dbReference type="InterPro" id="IPR028885">
    <property type="entry name" value="MOCS3/Uba4"/>
</dbReference>
<dbReference type="InterPro" id="IPR001763">
    <property type="entry name" value="Rhodanese-like_dom"/>
</dbReference>
<dbReference type="InterPro" id="IPR036873">
    <property type="entry name" value="Rhodanese-like_dom_sf"/>
</dbReference>
<dbReference type="InterPro" id="IPR045886">
    <property type="entry name" value="ThiF/MoeB/HesA"/>
</dbReference>
<dbReference type="InterPro" id="IPR000594">
    <property type="entry name" value="ThiF_NAD_FAD-bd"/>
</dbReference>
<dbReference type="InterPro" id="IPR035985">
    <property type="entry name" value="Ubiquitin-activating_enz"/>
</dbReference>
<dbReference type="PANTHER" id="PTHR10953:SF102">
    <property type="entry name" value="ADENYLYLTRANSFERASE AND SULFURTRANSFERASE MOCS3"/>
    <property type="match status" value="1"/>
</dbReference>
<dbReference type="PANTHER" id="PTHR10953">
    <property type="entry name" value="UBIQUITIN-ACTIVATING ENZYME E1"/>
    <property type="match status" value="1"/>
</dbReference>
<dbReference type="Pfam" id="PF00581">
    <property type="entry name" value="Rhodanese"/>
    <property type="match status" value="1"/>
</dbReference>
<dbReference type="Pfam" id="PF00899">
    <property type="entry name" value="ThiF"/>
    <property type="match status" value="1"/>
</dbReference>
<dbReference type="SMART" id="SM00450">
    <property type="entry name" value="RHOD"/>
    <property type="match status" value="1"/>
</dbReference>
<dbReference type="SUPFAM" id="SSF69572">
    <property type="entry name" value="Activating enzymes of the ubiquitin-like proteins"/>
    <property type="match status" value="1"/>
</dbReference>
<dbReference type="PROSITE" id="PS50206">
    <property type="entry name" value="RHODANESE_3"/>
    <property type="match status" value="1"/>
</dbReference>
<reference key="1">
    <citation type="submission" date="2005-03" db="EMBL/GenBank/DDBJ databases">
        <title>Annotation of the Saccharomyces cerevisiae RM11-1a genome.</title>
        <authorList>
            <consortium name="The Broad Institute Genome Sequencing Platform"/>
            <person name="Birren B.W."/>
            <person name="Lander E.S."/>
            <person name="Galagan J.E."/>
            <person name="Nusbaum C."/>
            <person name="Devon K."/>
            <person name="Cuomo C."/>
            <person name="Jaffe D.B."/>
            <person name="Butler J."/>
            <person name="Alvarez P."/>
            <person name="Gnerre S."/>
            <person name="Grabherr M."/>
            <person name="Kleber M."/>
            <person name="Mauceli E.W."/>
            <person name="Brockman W."/>
            <person name="MacCallum I.A."/>
            <person name="Rounsley S."/>
            <person name="Young S.K."/>
            <person name="LaButti K."/>
            <person name="Pushparaj V."/>
            <person name="DeCaprio D."/>
            <person name="Crawford M."/>
            <person name="Koehrsen M."/>
            <person name="Engels R."/>
            <person name="Montgomery P."/>
            <person name="Pearson M."/>
            <person name="Howarth C."/>
            <person name="Larson L."/>
            <person name="Luoma S."/>
            <person name="White J."/>
            <person name="O'Leary S."/>
            <person name="Kodira C.D."/>
            <person name="Zeng Q."/>
            <person name="Yandava C."/>
            <person name="Alvarado L."/>
            <person name="Pratt S."/>
            <person name="Kruglyak L."/>
        </authorList>
    </citation>
    <scope>NUCLEOTIDE SEQUENCE [LARGE SCALE GENOMIC DNA]</scope>
    <source>
        <strain>RM11-1a</strain>
    </source>
</reference>
<accession>B3LSM6</accession>
<comment type="function">
    <text evidence="2">Plays a central role in 2-thiolation of mcm(5)S(2)U at tRNA wobble positions of cytosolic tRNA(Lys), tRNA(Glu) and tRNA(Gln). Acts by mediating the C-terminal thiocarboxylation of sulfur carrier URM1. Its N-terminus first activates URM1 as acyl-adenylate (-COAMP), then the persulfide sulfur on the catalytic cysteine is transferred to URM1 to form thiocarboxylation (-COSH) of its C-terminus. The reaction probably involves hydrogen sulfide that is generated from the persulfide intermediate and that acts as a nucleophile towards URM1. Subsequently, a transient disulfide bond is formed. Does not use thiosulfate as sulfur donor; NFS1 probably acting as a sulfur donor for thiocarboxylation reactions. Prior mcm(5) tRNA modification by the elongator complex is required for 2-thiolation. May also be involved in protein urmylation.</text>
</comment>
<comment type="cofactor">
    <cofactor evidence="2">
        <name>Zn(2+)</name>
        <dbReference type="ChEBI" id="CHEBI:29105"/>
    </cofactor>
    <text evidence="2">Binds 1 zinc ion per subunit.</text>
</comment>
<comment type="pathway">
    <text evidence="2">tRNA modification; 5-methoxycarbonylmethyl-2-thiouridine-tRNA biosynthesis.</text>
</comment>
<comment type="subcellular location">
    <subcellularLocation>
        <location evidence="1">Cytoplasm</location>
        <location evidence="1">Cytosol</location>
    </subcellularLocation>
</comment>
<comment type="similarity">
    <text evidence="2">In the N-terminal section; belongs to the HesA/MoeB/ThiF family. UBA4 subfamily.</text>
</comment>
<sequence>MNDYHLEDTTSELEALRLENAQLREQLAKREDSSRDYPLSLEEYQRYGRQMIVEETGGVAGQVKLKNTKVLVVGAGGLGCPALPYLAGAGVGQIGIVDNDVVETSNLHRQVLHDSSRVGMLKCESARQYITKLNPHINVVTYPVRLNSSNAFDIFKGYNYILDCTDSPLTRYLVSDVAVNLGITVVSASGLGTEGQLTILNFNNIGPCYRCFYPTPPPPNAVTSCQEGGVIGPCIGLVGTMMAVETLKLILGIYTNENFSPFLMLYSGFPQQSLRTFKMRGRQEKCLCCGKNRTITKEAIEKGEINYELFCGARNYNVCEPDERISVDAFQRIYKDDEFLAKHIFLDVRPSHHYEISHFPEAVNIPIKNLRDMNGDLKKLQEKLPSVEKDSNIVILCRYGNDSQLATRLLKDKFGFSNVRDVRGGYFKYIDDIDQTIPKY</sequence>